<gene>
    <name evidence="1" type="primary">codY</name>
    <name type="ordered locus">BAMEG_0666</name>
</gene>
<sequence length="259" mass="28774">MELLAKTRKLNALLQSAAGKPVNFREMSDTMCEVIEANVFVVSRRGKLLGYAIHQQIENERMKQMLAERQFPEEYTQSLFNITETSSNLDVNSAYTAFPVENKELFGQGLTTIVPIVGGGERLGTLVLARLGQEFLDDDLILAEYSSTVVGMEILREKAEEIEEEARSKAVVQMAISSLSYSELEAIEHIFEELNGTEGLLVASKIADRVGITRSVIVNALRKLESAGVIESRSLGMKGTYIKVLNDKFLHELAKLKTN</sequence>
<keyword id="KW-0963">Cytoplasm</keyword>
<keyword id="KW-0238">DNA-binding</keyword>
<keyword id="KW-0597">Phosphoprotein</keyword>
<keyword id="KW-0678">Repressor</keyword>
<keyword id="KW-0804">Transcription</keyword>
<keyword id="KW-0805">Transcription regulation</keyword>
<accession>C3L799</accession>
<evidence type="ECO:0000255" key="1">
    <source>
        <dbReference type="HAMAP-Rule" id="MF_00621"/>
    </source>
</evidence>
<dbReference type="EMBL" id="CP001215">
    <property type="protein sequence ID" value="ACP13843.1"/>
    <property type="molecule type" value="Genomic_DNA"/>
</dbReference>
<dbReference type="RefSeq" id="WP_000421288.1">
    <property type="nucleotide sequence ID" value="NC_012581.1"/>
</dbReference>
<dbReference type="SMR" id="C3L799"/>
<dbReference type="GeneID" id="83637535"/>
<dbReference type="KEGG" id="bah:BAMEG_0666"/>
<dbReference type="HOGENOM" id="CLU_089581_0_0_9"/>
<dbReference type="GO" id="GO:0005737">
    <property type="term" value="C:cytoplasm"/>
    <property type="evidence" value="ECO:0007669"/>
    <property type="project" value="UniProtKB-SubCell"/>
</dbReference>
<dbReference type="GO" id="GO:0003677">
    <property type="term" value="F:DNA binding"/>
    <property type="evidence" value="ECO:0007669"/>
    <property type="project" value="UniProtKB-UniRule"/>
</dbReference>
<dbReference type="GO" id="GO:0003700">
    <property type="term" value="F:DNA-binding transcription factor activity"/>
    <property type="evidence" value="ECO:0007669"/>
    <property type="project" value="InterPro"/>
</dbReference>
<dbReference type="GO" id="GO:0005525">
    <property type="term" value="F:GTP binding"/>
    <property type="evidence" value="ECO:0007669"/>
    <property type="project" value="InterPro"/>
</dbReference>
<dbReference type="GO" id="GO:0045892">
    <property type="term" value="P:negative regulation of DNA-templated transcription"/>
    <property type="evidence" value="ECO:0007669"/>
    <property type="project" value="UniProtKB-UniRule"/>
</dbReference>
<dbReference type="FunFam" id="1.10.10.10:FF:000034">
    <property type="entry name" value="GTP-sensing transcriptional pleiotropic repressor CodY"/>
    <property type="match status" value="1"/>
</dbReference>
<dbReference type="FunFam" id="3.30.450.40:FF:000003">
    <property type="entry name" value="GTP-sensing transcriptional pleiotropic repressor CodY"/>
    <property type="match status" value="1"/>
</dbReference>
<dbReference type="Gene3D" id="3.30.450.40">
    <property type="match status" value="1"/>
</dbReference>
<dbReference type="Gene3D" id="1.10.10.10">
    <property type="entry name" value="Winged helix-like DNA-binding domain superfamily/Winged helix DNA-binding domain"/>
    <property type="match status" value="1"/>
</dbReference>
<dbReference type="HAMAP" id="MF_00621">
    <property type="entry name" value="HTH_type_CodY"/>
    <property type="match status" value="1"/>
</dbReference>
<dbReference type="InterPro" id="IPR014154">
    <property type="entry name" value="CodY"/>
</dbReference>
<dbReference type="InterPro" id="IPR029016">
    <property type="entry name" value="GAF-like_dom_sf"/>
</dbReference>
<dbReference type="InterPro" id="IPR013198">
    <property type="entry name" value="GTP_trans_reg_CodY_C"/>
</dbReference>
<dbReference type="InterPro" id="IPR010312">
    <property type="entry name" value="Transc_reg_CodY_N"/>
</dbReference>
<dbReference type="InterPro" id="IPR036388">
    <property type="entry name" value="WH-like_DNA-bd_sf"/>
</dbReference>
<dbReference type="InterPro" id="IPR036390">
    <property type="entry name" value="WH_DNA-bd_sf"/>
</dbReference>
<dbReference type="NCBIfam" id="TIGR02787">
    <property type="entry name" value="codY_Gpos"/>
    <property type="match status" value="1"/>
</dbReference>
<dbReference type="NCBIfam" id="NF003170">
    <property type="entry name" value="PRK04158.1"/>
    <property type="match status" value="1"/>
</dbReference>
<dbReference type="PANTHER" id="PTHR40062:SF1">
    <property type="entry name" value="GLOBAL TRANSCRIPTIONAL REGULATOR CODY"/>
    <property type="match status" value="1"/>
</dbReference>
<dbReference type="PANTHER" id="PTHR40062">
    <property type="entry name" value="GTP-SENSING TRANSCRIPTIONAL PLEIOTROPIC REPRESSOR CODY"/>
    <property type="match status" value="1"/>
</dbReference>
<dbReference type="Pfam" id="PF06018">
    <property type="entry name" value="CodY"/>
    <property type="match status" value="1"/>
</dbReference>
<dbReference type="Pfam" id="PF08222">
    <property type="entry name" value="HTH_CodY"/>
    <property type="match status" value="1"/>
</dbReference>
<dbReference type="PIRSF" id="PIRSF011572">
    <property type="entry name" value="GTP_sensing_CodY"/>
    <property type="match status" value="1"/>
</dbReference>
<dbReference type="SUPFAM" id="SSF46785">
    <property type="entry name" value="Winged helix' DNA-binding domain"/>
    <property type="match status" value="1"/>
</dbReference>
<feature type="chain" id="PRO_1000147199" description="Global transcriptional regulator CodY">
    <location>
        <begin position="1"/>
        <end position="259"/>
    </location>
</feature>
<feature type="DNA-binding region" description="H-T-H motif" evidence="1">
    <location>
        <begin position="203"/>
        <end position="222"/>
    </location>
</feature>
<feature type="region of interest" description="GAF domain" evidence="1">
    <location>
        <begin position="1"/>
        <end position="155"/>
    </location>
</feature>
<feature type="modified residue" description="Phosphoserine" evidence="1">
    <location>
        <position position="215"/>
    </location>
</feature>
<proteinExistence type="inferred from homology"/>
<name>CODY_BACAC</name>
<comment type="function">
    <text evidence="1">DNA-binding global transcriptional regulator which is involved in the adaptive response to starvation and acts by directly or indirectly controlling the expression of numerous genes in response to nutrient availability. During rapid exponential growth, CodY is highly active and represses genes whose products allow adaptation to nutrient depletion.</text>
</comment>
<comment type="subcellular location">
    <subcellularLocation>
        <location evidence="1">Cytoplasm</location>
    </subcellularLocation>
</comment>
<comment type="similarity">
    <text evidence="1">Belongs to the CodY family.</text>
</comment>
<organism>
    <name type="scientific">Bacillus anthracis (strain CDC 684 / NRRL 3495)</name>
    <dbReference type="NCBI Taxonomy" id="568206"/>
    <lineage>
        <taxon>Bacteria</taxon>
        <taxon>Bacillati</taxon>
        <taxon>Bacillota</taxon>
        <taxon>Bacilli</taxon>
        <taxon>Bacillales</taxon>
        <taxon>Bacillaceae</taxon>
        <taxon>Bacillus</taxon>
        <taxon>Bacillus cereus group</taxon>
    </lineage>
</organism>
<protein>
    <recommendedName>
        <fullName evidence="1">Global transcriptional regulator CodY</fullName>
    </recommendedName>
</protein>
<reference key="1">
    <citation type="submission" date="2008-10" db="EMBL/GenBank/DDBJ databases">
        <title>Genome sequence of Bacillus anthracis str. CDC 684.</title>
        <authorList>
            <person name="Dodson R.J."/>
            <person name="Munk A.C."/>
            <person name="Brettin T."/>
            <person name="Bruce D."/>
            <person name="Detter C."/>
            <person name="Tapia R."/>
            <person name="Han C."/>
            <person name="Sutton G."/>
            <person name="Sims D."/>
        </authorList>
    </citation>
    <scope>NUCLEOTIDE SEQUENCE [LARGE SCALE GENOMIC DNA]</scope>
    <source>
        <strain>CDC 684 / NRRL 3495</strain>
    </source>
</reference>